<name>COF_ECOUT</name>
<proteinExistence type="inferred from homology"/>
<accession>Q1RF89</accession>
<keyword id="KW-0378">Hydrolase</keyword>
<keyword id="KW-0460">Magnesium</keyword>
<keyword id="KW-0479">Metal-binding</keyword>
<organism>
    <name type="scientific">Escherichia coli (strain UTI89 / UPEC)</name>
    <dbReference type="NCBI Taxonomy" id="364106"/>
    <lineage>
        <taxon>Bacteria</taxon>
        <taxon>Pseudomonadati</taxon>
        <taxon>Pseudomonadota</taxon>
        <taxon>Gammaproteobacteria</taxon>
        <taxon>Enterobacterales</taxon>
        <taxon>Enterobacteriaceae</taxon>
        <taxon>Escherichia</taxon>
    </lineage>
</organism>
<reference key="1">
    <citation type="journal article" date="2006" name="Proc. Natl. Acad. Sci. U.S.A.">
        <title>Identification of genes subject to positive selection in uropathogenic strains of Escherichia coli: a comparative genomics approach.</title>
        <authorList>
            <person name="Chen S.L."/>
            <person name="Hung C.-S."/>
            <person name="Xu J."/>
            <person name="Reigstad C.S."/>
            <person name="Magrini V."/>
            <person name="Sabo A."/>
            <person name="Blasiar D."/>
            <person name="Bieri T."/>
            <person name="Meyer R.R."/>
            <person name="Ozersky P."/>
            <person name="Armstrong J.R."/>
            <person name="Fulton R.S."/>
            <person name="Latreille J.P."/>
            <person name="Spieth J."/>
            <person name="Hooton T.M."/>
            <person name="Mardis E.R."/>
            <person name="Hultgren S.J."/>
            <person name="Gordon J.I."/>
        </authorList>
    </citation>
    <scope>NUCLEOTIDE SEQUENCE [LARGE SCALE GENOMIC DNA]</scope>
    <source>
        <strain>UTI89 / UPEC</strain>
    </source>
</reference>
<gene>
    <name evidence="1" type="primary">cof</name>
    <name type="ordered locus">UTI89_C0474</name>
</gene>
<comment type="function">
    <text evidence="1">Catalyzes the hydrolysis of 4-amino-2-methyl-5-hydroxymethylpyrimidine pyrophosphate (HMP-PP) to 4-amino-2-methyl-5-hydroxymethylpyrimidine phosphate (HMP-P).</text>
</comment>
<comment type="catalytic activity">
    <reaction evidence="1">
        <text>4-amino-2-methyl-5-(diphosphooxymethyl)pyrimidine + H2O = 4-amino-2-methyl-5-(phosphooxymethyl)pyrimidine + phosphate + H(+)</text>
        <dbReference type="Rhea" id="RHEA:27914"/>
        <dbReference type="ChEBI" id="CHEBI:15377"/>
        <dbReference type="ChEBI" id="CHEBI:15378"/>
        <dbReference type="ChEBI" id="CHEBI:43474"/>
        <dbReference type="ChEBI" id="CHEBI:57841"/>
        <dbReference type="ChEBI" id="CHEBI:58354"/>
    </reaction>
</comment>
<comment type="cofactor">
    <cofactor evidence="1">
        <name>Mg(2+)</name>
        <dbReference type="ChEBI" id="CHEBI:18420"/>
    </cofactor>
</comment>
<comment type="similarity">
    <text evidence="1">Belongs to the HAD-like hydrolase superfamily. Cof family.</text>
</comment>
<comment type="sequence caution" evidence="2">
    <conflict type="erroneous initiation">
        <sequence resource="EMBL-CDS" id="ABE05975"/>
    </conflict>
    <text>Extended N-terminus.</text>
</comment>
<feature type="chain" id="PRO_0000342980" description="HMP-PP phosphatase">
    <location>
        <begin position="1"/>
        <end position="272"/>
    </location>
</feature>
<feature type="active site" description="Nucleophile" evidence="1">
    <location>
        <position position="8"/>
    </location>
</feature>
<feature type="binding site" evidence="1">
    <location>
        <position position="8"/>
    </location>
    <ligand>
        <name>Mg(2+)</name>
        <dbReference type="ChEBI" id="CHEBI:18420"/>
    </ligand>
</feature>
<feature type="binding site" evidence="1">
    <location>
        <position position="10"/>
    </location>
    <ligand>
        <name>Mg(2+)</name>
        <dbReference type="ChEBI" id="CHEBI:18420"/>
    </ligand>
</feature>
<feature type="binding site" evidence="1">
    <location>
        <position position="212"/>
    </location>
    <ligand>
        <name>Mg(2+)</name>
        <dbReference type="ChEBI" id="CHEBI:18420"/>
    </ligand>
</feature>
<sequence>MARLAAFDMDGTLLMPDHHLGEKTLSTLARLRERDITLTFATGRHALEMQHILGALSLDAYLITGNGTRVHSLEGELLHRDDLPADVAELVLYQQWDTRASMHIFNDDGWFTGKEIPALLQAFVYSGFRYQIIDVKKMPLGSVTKICFCGDHDDLTRLQIQLYEALGERAHLCFSATDCLEVLPVGCNKGAALTVLTQHLGLSLRDCMAFGDAMNDREMLGSVGSGFIMGNAMPQLRAELPHLPVIGHCRNQAVSHYLTHWLDYPHLPYSPE</sequence>
<evidence type="ECO:0000255" key="1">
    <source>
        <dbReference type="HAMAP-Rule" id="MF_01847"/>
    </source>
</evidence>
<evidence type="ECO:0000305" key="2"/>
<dbReference type="EC" id="3.6.1.-" evidence="1"/>
<dbReference type="EMBL" id="CP000243">
    <property type="protein sequence ID" value="ABE05975.1"/>
    <property type="status" value="ALT_INIT"/>
    <property type="molecule type" value="Genomic_DNA"/>
</dbReference>
<dbReference type="RefSeq" id="WP_000113027.1">
    <property type="nucleotide sequence ID" value="NZ_CP064825.1"/>
</dbReference>
<dbReference type="SMR" id="Q1RF89"/>
<dbReference type="GeneID" id="93777004"/>
<dbReference type="KEGG" id="eci:UTI89_C0474"/>
<dbReference type="HOGENOM" id="CLU_044146_5_2_6"/>
<dbReference type="Proteomes" id="UP000001952">
    <property type="component" value="Chromosome"/>
</dbReference>
<dbReference type="GO" id="GO:0002145">
    <property type="term" value="F:4-amino-5-hydroxymethyl-2-methylpyrimidine diphosphatase activity"/>
    <property type="evidence" value="ECO:0007669"/>
    <property type="project" value="RHEA"/>
</dbReference>
<dbReference type="GO" id="GO:0000287">
    <property type="term" value="F:magnesium ion binding"/>
    <property type="evidence" value="ECO:0000250"/>
    <property type="project" value="UniProtKB"/>
</dbReference>
<dbReference type="GO" id="GO:0016791">
    <property type="term" value="F:phosphatase activity"/>
    <property type="evidence" value="ECO:0000250"/>
    <property type="project" value="UniProtKB"/>
</dbReference>
<dbReference type="CDD" id="cd07516">
    <property type="entry name" value="HAD_Pase"/>
    <property type="match status" value="1"/>
</dbReference>
<dbReference type="FunFam" id="3.30.1240.10:FF:000002">
    <property type="entry name" value="HMP-PP phosphatase"/>
    <property type="match status" value="1"/>
</dbReference>
<dbReference type="Gene3D" id="3.30.1240.10">
    <property type="match status" value="1"/>
</dbReference>
<dbReference type="Gene3D" id="3.40.50.1000">
    <property type="entry name" value="HAD superfamily/HAD-like"/>
    <property type="match status" value="1"/>
</dbReference>
<dbReference type="HAMAP" id="MF_01847">
    <property type="entry name" value="HMP_PP_phosphat"/>
    <property type="match status" value="1"/>
</dbReference>
<dbReference type="InterPro" id="IPR000150">
    <property type="entry name" value="Cof"/>
</dbReference>
<dbReference type="InterPro" id="IPR036412">
    <property type="entry name" value="HAD-like_sf"/>
</dbReference>
<dbReference type="InterPro" id="IPR006379">
    <property type="entry name" value="HAD-SF_hydro_IIB"/>
</dbReference>
<dbReference type="InterPro" id="IPR023214">
    <property type="entry name" value="HAD_sf"/>
</dbReference>
<dbReference type="InterPro" id="IPR023938">
    <property type="entry name" value="HMP-PP_phosphatase"/>
</dbReference>
<dbReference type="NCBIfam" id="TIGR00099">
    <property type="entry name" value="Cof-subfamily"/>
    <property type="match status" value="1"/>
</dbReference>
<dbReference type="NCBIfam" id="TIGR01484">
    <property type="entry name" value="HAD-SF-IIB"/>
    <property type="match status" value="1"/>
</dbReference>
<dbReference type="NCBIfam" id="NF011705">
    <property type="entry name" value="PRK15126.1"/>
    <property type="match status" value="1"/>
</dbReference>
<dbReference type="PANTHER" id="PTHR47267">
    <property type="match status" value="1"/>
</dbReference>
<dbReference type="PANTHER" id="PTHR47267:SF2">
    <property type="entry name" value="HMP-PP PHOSPHATASE"/>
    <property type="match status" value="1"/>
</dbReference>
<dbReference type="Pfam" id="PF08282">
    <property type="entry name" value="Hydrolase_3"/>
    <property type="match status" value="1"/>
</dbReference>
<dbReference type="SFLD" id="SFLDG01140">
    <property type="entry name" value="C2.B:_Phosphomannomutase_and_P"/>
    <property type="match status" value="1"/>
</dbReference>
<dbReference type="SFLD" id="SFLDS00003">
    <property type="entry name" value="Haloacid_Dehalogenase"/>
    <property type="match status" value="1"/>
</dbReference>
<dbReference type="SUPFAM" id="SSF56784">
    <property type="entry name" value="HAD-like"/>
    <property type="match status" value="1"/>
</dbReference>
<dbReference type="PROSITE" id="PS01228">
    <property type="entry name" value="COF_1"/>
    <property type="match status" value="1"/>
</dbReference>
<dbReference type="PROSITE" id="PS01229">
    <property type="entry name" value="COF_2"/>
    <property type="match status" value="1"/>
</dbReference>
<protein>
    <recommendedName>
        <fullName evidence="1">HMP-PP phosphatase</fullName>
        <ecNumber evidence="1">3.6.1.-</ecNumber>
    </recommendedName>
</protein>